<evidence type="ECO:0000255" key="1">
    <source>
        <dbReference type="HAMAP-Rule" id="MF_00505"/>
    </source>
</evidence>
<keyword id="KW-0067">ATP-binding</keyword>
<keyword id="KW-0143">Chaperone</keyword>
<keyword id="KW-0963">Cytoplasm</keyword>
<keyword id="KW-0547">Nucleotide-binding</keyword>
<keyword id="KW-0346">Stress response</keyword>
<sequence>MVSKQQTMGFQTEVKQMLHLVVHSLYSNKEIFLRELISNASDALDKLRFLALSNGSLFENDSDLKISIQINEKLQTITISDNGIGLSWEEAVENLGTIAKSGTKEFISQLTGEQAKDSQLIGQFGVGFYSAFIVADKVTVKSRRAGLQPEDGIVWESKGDGEFTIGYEKKLTRGTEITLHLKPENDEFLSDWRIRGIISKYSDHICWPILMKKLSEEGKESKEFETVNKATALWTLQKSEISEEEYKQLYKHISHDYMDPLTWSHNHVEGKHEYITLLYIPAHAPFDLWQHEAKHGLKLYVKRVFIMDEATQFLPRYLRFVKGIVDASDLPLNISREILQDNKQVESIRAACTKRVLSMLEKMATNDKETYQKFWNEFGLVLKEGPIEDFANKEAIAKLLRFSTTASGSEKQEVSLEEYVSRMKEGQDKIYYITASSYNAAKNSPHLEIFRKKGIEVLLLSDKVDEWLVGYMNEFAGKKLQSISKGKIELGDDETSEQIKEQEKTLEPLIKHIKSVLNDRVKDVLLTNRLTDSPACVVADEQDMGLEMQRILQAAGQQVPVSKPIFEINPDHALIKRLHDIQDDNQFELWVTMLFEQAVLAEGGQLDNPADFVNRVNRLLVSS</sequence>
<dbReference type="EMBL" id="CR628336">
    <property type="protein sequence ID" value="CAH12474.1"/>
    <property type="molecule type" value="Genomic_DNA"/>
</dbReference>
<dbReference type="RefSeq" id="WP_011213666.1">
    <property type="nucleotide sequence ID" value="NC_006368.1"/>
</dbReference>
<dbReference type="SMR" id="Q5X5J7"/>
<dbReference type="KEGG" id="lpp:lpp1323"/>
<dbReference type="LegioList" id="lpp1323"/>
<dbReference type="HOGENOM" id="CLU_006684_3_0_6"/>
<dbReference type="GO" id="GO:0005737">
    <property type="term" value="C:cytoplasm"/>
    <property type="evidence" value="ECO:0007669"/>
    <property type="project" value="UniProtKB-SubCell"/>
</dbReference>
<dbReference type="GO" id="GO:0005524">
    <property type="term" value="F:ATP binding"/>
    <property type="evidence" value="ECO:0007669"/>
    <property type="project" value="UniProtKB-UniRule"/>
</dbReference>
<dbReference type="GO" id="GO:0016887">
    <property type="term" value="F:ATP hydrolysis activity"/>
    <property type="evidence" value="ECO:0007669"/>
    <property type="project" value="InterPro"/>
</dbReference>
<dbReference type="GO" id="GO:0140662">
    <property type="term" value="F:ATP-dependent protein folding chaperone"/>
    <property type="evidence" value="ECO:0007669"/>
    <property type="project" value="InterPro"/>
</dbReference>
<dbReference type="GO" id="GO:0051082">
    <property type="term" value="F:unfolded protein binding"/>
    <property type="evidence" value="ECO:0007669"/>
    <property type="project" value="UniProtKB-UniRule"/>
</dbReference>
<dbReference type="CDD" id="cd16927">
    <property type="entry name" value="HATPase_Hsp90-like"/>
    <property type="match status" value="1"/>
</dbReference>
<dbReference type="FunFam" id="3.30.230.80:FF:000002">
    <property type="entry name" value="Molecular chaperone HtpG"/>
    <property type="match status" value="1"/>
</dbReference>
<dbReference type="FunFam" id="3.30.565.10:FF:000009">
    <property type="entry name" value="Molecular chaperone HtpG"/>
    <property type="match status" value="1"/>
</dbReference>
<dbReference type="Gene3D" id="3.30.230.80">
    <property type="match status" value="1"/>
</dbReference>
<dbReference type="Gene3D" id="3.40.50.11260">
    <property type="match status" value="1"/>
</dbReference>
<dbReference type="Gene3D" id="1.20.120.790">
    <property type="entry name" value="Heat shock protein 90, C-terminal domain"/>
    <property type="match status" value="1"/>
</dbReference>
<dbReference type="Gene3D" id="3.30.565.10">
    <property type="entry name" value="Histidine kinase-like ATPase, C-terminal domain"/>
    <property type="match status" value="1"/>
</dbReference>
<dbReference type="HAMAP" id="MF_00505">
    <property type="entry name" value="HSP90"/>
    <property type="match status" value="1"/>
</dbReference>
<dbReference type="InterPro" id="IPR036890">
    <property type="entry name" value="HATPase_C_sf"/>
</dbReference>
<dbReference type="InterPro" id="IPR019805">
    <property type="entry name" value="Heat_shock_protein_90_CS"/>
</dbReference>
<dbReference type="InterPro" id="IPR037196">
    <property type="entry name" value="HSP90_C"/>
</dbReference>
<dbReference type="InterPro" id="IPR001404">
    <property type="entry name" value="Hsp90_fam"/>
</dbReference>
<dbReference type="InterPro" id="IPR020575">
    <property type="entry name" value="Hsp90_N"/>
</dbReference>
<dbReference type="InterPro" id="IPR020568">
    <property type="entry name" value="Ribosomal_Su5_D2-typ_SF"/>
</dbReference>
<dbReference type="NCBIfam" id="NF003555">
    <property type="entry name" value="PRK05218.1"/>
    <property type="match status" value="1"/>
</dbReference>
<dbReference type="PANTHER" id="PTHR11528">
    <property type="entry name" value="HEAT SHOCK PROTEIN 90 FAMILY MEMBER"/>
    <property type="match status" value="1"/>
</dbReference>
<dbReference type="Pfam" id="PF13589">
    <property type="entry name" value="HATPase_c_3"/>
    <property type="match status" value="1"/>
</dbReference>
<dbReference type="Pfam" id="PF00183">
    <property type="entry name" value="HSP90"/>
    <property type="match status" value="1"/>
</dbReference>
<dbReference type="PIRSF" id="PIRSF002583">
    <property type="entry name" value="Hsp90"/>
    <property type="match status" value="1"/>
</dbReference>
<dbReference type="PRINTS" id="PR00775">
    <property type="entry name" value="HEATSHOCK90"/>
</dbReference>
<dbReference type="SMART" id="SM00387">
    <property type="entry name" value="HATPase_c"/>
    <property type="match status" value="1"/>
</dbReference>
<dbReference type="SUPFAM" id="SSF55874">
    <property type="entry name" value="ATPase domain of HSP90 chaperone/DNA topoisomerase II/histidine kinase"/>
    <property type="match status" value="1"/>
</dbReference>
<dbReference type="SUPFAM" id="SSF110942">
    <property type="entry name" value="HSP90 C-terminal domain"/>
    <property type="match status" value="1"/>
</dbReference>
<dbReference type="SUPFAM" id="SSF54211">
    <property type="entry name" value="Ribosomal protein S5 domain 2-like"/>
    <property type="match status" value="1"/>
</dbReference>
<dbReference type="PROSITE" id="PS00298">
    <property type="entry name" value="HSP90"/>
    <property type="match status" value="1"/>
</dbReference>
<protein>
    <recommendedName>
        <fullName evidence="1">Chaperone protein HtpG</fullName>
    </recommendedName>
    <alternativeName>
        <fullName evidence="1">Heat shock protein HtpG</fullName>
    </alternativeName>
    <alternativeName>
        <fullName evidence="1">High temperature protein G</fullName>
    </alternativeName>
</protein>
<name>HTPG_LEGPA</name>
<comment type="function">
    <text evidence="1">Molecular chaperone. Has ATPase activity.</text>
</comment>
<comment type="subunit">
    <text evidence="1">Homodimer.</text>
</comment>
<comment type="subcellular location">
    <subcellularLocation>
        <location evidence="1">Cytoplasm</location>
    </subcellularLocation>
</comment>
<comment type="similarity">
    <text evidence="1">Belongs to the heat shock protein 90 family.</text>
</comment>
<reference key="1">
    <citation type="journal article" date="2004" name="Nat. Genet.">
        <title>Evidence in the Legionella pneumophila genome for exploitation of host cell functions and high genome plasticity.</title>
        <authorList>
            <person name="Cazalet C."/>
            <person name="Rusniok C."/>
            <person name="Brueggemann H."/>
            <person name="Zidane N."/>
            <person name="Magnier A."/>
            <person name="Ma L."/>
            <person name="Tichit M."/>
            <person name="Jarraud S."/>
            <person name="Bouchier C."/>
            <person name="Vandenesch F."/>
            <person name="Kunst F."/>
            <person name="Etienne J."/>
            <person name="Glaser P."/>
            <person name="Buchrieser C."/>
        </authorList>
    </citation>
    <scope>NUCLEOTIDE SEQUENCE [LARGE SCALE GENOMIC DNA]</scope>
    <source>
        <strain>Paris</strain>
    </source>
</reference>
<gene>
    <name evidence="1" type="primary">htpG</name>
    <name type="ordered locus">lpp1323</name>
</gene>
<organism>
    <name type="scientific">Legionella pneumophila (strain Paris)</name>
    <dbReference type="NCBI Taxonomy" id="297246"/>
    <lineage>
        <taxon>Bacteria</taxon>
        <taxon>Pseudomonadati</taxon>
        <taxon>Pseudomonadota</taxon>
        <taxon>Gammaproteobacteria</taxon>
        <taxon>Legionellales</taxon>
        <taxon>Legionellaceae</taxon>
        <taxon>Legionella</taxon>
    </lineage>
</organism>
<feature type="chain" id="PRO_0000224213" description="Chaperone protein HtpG">
    <location>
        <begin position="1"/>
        <end position="623"/>
    </location>
</feature>
<feature type="region of interest" description="A; substrate-binding" evidence="1">
    <location>
        <begin position="1"/>
        <end position="336"/>
    </location>
</feature>
<feature type="region of interest" description="B" evidence="1">
    <location>
        <begin position="337"/>
        <end position="550"/>
    </location>
</feature>
<feature type="region of interest" description="C" evidence="1">
    <location>
        <begin position="551"/>
        <end position="623"/>
    </location>
</feature>
<proteinExistence type="inferred from homology"/>
<accession>Q5X5J7</accession>